<comment type="function">
    <text evidence="1">Binds to DNA and alters its conformation. May be involved in regulation of gene expression, nucleoid organization and DNA protection.</text>
</comment>
<comment type="subunit">
    <text evidence="1">Homodimer.</text>
</comment>
<comment type="subcellular location">
    <subcellularLocation>
        <location evidence="1">Cytoplasm</location>
        <location evidence="1">Nucleoid</location>
    </subcellularLocation>
</comment>
<comment type="similarity">
    <text evidence="1">Belongs to the YbaB/EbfC family.</text>
</comment>
<comment type="sequence caution" evidence="2">
    <conflict type="erroneous initiation">
        <sequence resource="EMBL-CDS" id="CAE10708"/>
    </conflict>
</comment>
<proteinExistence type="inferred from homology"/>
<feature type="chain" id="PRO_0000170466" description="Nucleoid-associated protein WS1681">
    <location>
        <begin position="1"/>
        <end position="102"/>
    </location>
</feature>
<accession>O34247</accession>
<evidence type="ECO:0000255" key="1">
    <source>
        <dbReference type="HAMAP-Rule" id="MF_00274"/>
    </source>
</evidence>
<evidence type="ECO:0000305" key="2"/>
<protein>
    <recommendedName>
        <fullName evidence="1">Nucleoid-associated protein WS1681</fullName>
    </recommendedName>
</protein>
<name>Y1681_WOLSU</name>
<sequence>MFDPSKLSEMLTQFQDKAKEMEEKSHNTSFTAKSGGGLVSVSMSGAGELLDVSIDDSLLEDKESLQILLISAINDVYKSVEENKKSMTLGMLGGMAPFPFGS</sequence>
<dbReference type="EMBL" id="AJ003049">
    <property type="protein sequence ID" value="CAA05823.1"/>
    <property type="molecule type" value="Genomic_DNA"/>
</dbReference>
<dbReference type="EMBL" id="BX571661">
    <property type="protein sequence ID" value="CAE10708.1"/>
    <property type="status" value="ALT_INIT"/>
    <property type="molecule type" value="Genomic_DNA"/>
</dbReference>
<dbReference type="RefSeq" id="WP_041571871.1">
    <property type="nucleotide sequence ID" value="NC_005090.1"/>
</dbReference>
<dbReference type="SMR" id="O34247"/>
<dbReference type="STRING" id="273121.WS1681"/>
<dbReference type="KEGG" id="wsu:WS1681"/>
<dbReference type="eggNOG" id="COG0718">
    <property type="taxonomic scope" value="Bacteria"/>
</dbReference>
<dbReference type="HOGENOM" id="CLU_140930_2_1_7"/>
<dbReference type="Proteomes" id="UP000000422">
    <property type="component" value="Chromosome"/>
</dbReference>
<dbReference type="GO" id="GO:0043590">
    <property type="term" value="C:bacterial nucleoid"/>
    <property type="evidence" value="ECO:0007669"/>
    <property type="project" value="UniProtKB-UniRule"/>
</dbReference>
<dbReference type="GO" id="GO:0005829">
    <property type="term" value="C:cytosol"/>
    <property type="evidence" value="ECO:0007669"/>
    <property type="project" value="TreeGrafter"/>
</dbReference>
<dbReference type="GO" id="GO:0003677">
    <property type="term" value="F:DNA binding"/>
    <property type="evidence" value="ECO:0007669"/>
    <property type="project" value="UniProtKB-UniRule"/>
</dbReference>
<dbReference type="Gene3D" id="3.30.1310.10">
    <property type="entry name" value="Nucleoid-associated protein YbaB-like domain"/>
    <property type="match status" value="1"/>
</dbReference>
<dbReference type="HAMAP" id="MF_00274">
    <property type="entry name" value="DNA_YbaB_EbfC"/>
    <property type="match status" value="1"/>
</dbReference>
<dbReference type="InterPro" id="IPR036894">
    <property type="entry name" value="YbaB-like_sf"/>
</dbReference>
<dbReference type="InterPro" id="IPR004401">
    <property type="entry name" value="YbaB/EbfC"/>
</dbReference>
<dbReference type="NCBIfam" id="TIGR00103">
    <property type="entry name" value="DNA_YbaB_EbfC"/>
    <property type="match status" value="1"/>
</dbReference>
<dbReference type="PANTHER" id="PTHR33449">
    <property type="entry name" value="NUCLEOID-ASSOCIATED PROTEIN YBAB"/>
    <property type="match status" value="1"/>
</dbReference>
<dbReference type="PANTHER" id="PTHR33449:SF1">
    <property type="entry name" value="NUCLEOID-ASSOCIATED PROTEIN YBAB"/>
    <property type="match status" value="1"/>
</dbReference>
<dbReference type="Pfam" id="PF02575">
    <property type="entry name" value="YbaB_DNA_bd"/>
    <property type="match status" value="1"/>
</dbReference>
<dbReference type="PIRSF" id="PIRSF004555">
    <property type="entry name" value="UCP004555"/>
    <property type="match status" value="1"/>
</dbReference>
<dbReference type="SUPFAM" id="SSF82607">
    <property type="entry name" value="YbaB-like"/>
    <property type="match status" value="1"/>
</dbReference>
<gene>
    <name type="ordered locus">WS1681</name>
</gene>
<reference key="1">
    <citation type="journal article" date="1998" name="Arch. Microbiol.">
        <title>Two membrane anchors of Wolinella succinogenes hydrogenase and their function in fumarate and polysulfide respiration.</title>
        <authorList>
            <person name="Gross R."/>
            <person name="Simon J."/>
            <person name="Theis F."/>
            <person name="Kroeger A."/>
        </authorList>
    </citation>
    <scope>NUCLEOTIDE SEQUENCE [GENOMIC DNA]</scope>
    <source>
        <strain>ATCC 29543 / DSM 1740 / CCUG 13145 / JCM 31913 / LMG 7466 / NCTC 11488 / FDC 602W</strain>
    </source>
</reference>
<reference key="2">
    <citation type="journal article" date="2003" name="Proc. Natl. Acad. Sci. U.S.A.">
        <title>Complete genome sequence and analysis of Wolinella succinogenes.</title>
        <authorList>
            <person name="Baar C."/>
            <person name="Eppinger M."/>
            <person name="Raddatz G."/>
            <person name="Simon J."/>
            <person name="Lanz C."/>
            <person name="Klimmek O."/>
            <person name="Nandakumar R."/>
            <person name="Gross R."/>
            <person name="Rosinus A."/>
            <person name="Keller H."/>
            <person name="Jagtap P."/>
            <person name="Linke B."/>
            <person name="Meyer F."/>
            <person name="Lederer H."/>
            <person name="Schuster S.C."/>
        </authorList>
    </citation>
    <scope>NUCLEOTIDE SEQUENCE [LARGE SCALE GENOMIC DNA]</scope>
    <source>
        <strain>ATCC 29543 / DSM 1740 / CCUG 13145 / JCM 31913 / LMG 7466 / NCTC 11488 / FDC 602W</strain>
    </source>
</reference>
<organism>
    <name type="scientific">Wolinella succinogenes (strain ATCC 29543 / DSM 1740 / CCUG 13145 / JCM 31913 / LMG 7466 / NCTC 11488 / FDC 602W)</name>
    <name type="common">Vibrio succinogenes</name>
    <dbReference type="NCBI Taxonomy" id="273121"/>
    <lineage>
        <taxon>Bacteria</taxon>
        <taxon>Pseudomonadati</taxon>
        <taxon>Campylobacterota</taxon>
        <taxon>Epsilonproteobacteria</taxon>
        <taxon>Campylobacterales</taxon>
        <taxon>Helicobacteraceae</taxon>
        <taxon>Wolinella</taxon>
    </lineage>
</organism>
<keyword id="KW-0963">Cytoplasm</keyword>
<keyword id="KW-0238">DNA-binding</keyword>
<keyword id="KW-1185">Reference proteome</keyword>